<gene>
    <name evidence="9" type="primary">sfc3</name>
    <name evidence="1" type="synonym">tfc3</name>
    <name type="ORF">SPBC336.07</name>
</gene>
<protein>
    <recommendedName>
        <fullName>Transcription factor tau subunit sfc3</fullName>
    </recommendedName>
    <alternativeName>
        <fullName>TFIIIC subunit sfc3</fullName>
    </alternativeName>
    <alternativeName>
        <fullName>Transcription factor C subunit 3</fullName>
    </alternativeName>
</protein>
<sequence>MDSLIRHCSEEIALDGSSGCSIDRLWEFAANFFFRQGIVQNLDDNYKTFVWPLILKEDGIEVWIEDEDATGLRSKMQEIPWNYQDITIELRARIRLFASEDRQWLTLTYKTKTDSKIQPLAFELLSCISRYRQEGVDRIQLCKETKQEPRSVYGRIQALEDASLISKVAINRSRAQTALLVLKRFESENSTINETVAQVSGKQIYNTEKIRSNICDAVQSSRNGICRHVDARAMVNLNHSRWERRYYARQVTYLHNNGYLRKCLTFVPNSPERCIRCLQFIKPYISSLDATEDDVDFTEVDDIPEDDELEEEEPLLPSKEEFDASFLQPLADVGPTLPQWSRFRPLEFQCFVLIRNAGFHGVITLQILSGLTGIRFNKPLFKLLGSLVEHRSSVPNHLSHMSITRFEDKTKKSRQYRYFTLQSQLNRLIRDGIPAETISKLLPHVHSLAGEFSPIDSSLFLNSLHHKGNMESNAEVSPDGMTLLPRKRGRPRKSANISVTSSPIRPSKNENNLPSLAISPVSEGFIQNATISTPSTSSNLSIAGSLTPSKTSRIYRGLAPLKNPEFNEDHVKKAEHLEPLLNVSSSVPSKNFTVSSPDHLKYGNTSSLQVSDSQSSIDLDSSFHYPVSVDSQLSHSTGSLMANFSSPTKKRRLESVDFIFLQRKGLILSYLVEQNGAFEISRKMFEDLADLKVRRNPETSRTVMDRRTFQQTLEKLMQEKKVRKLVIATNNGLGKLVRKDIVVQYDMKPDSPRFQQLRAQITTPEIEKQSTPEILKDVDVDFLKRNTSLSRRKSMPAEIKRHKESSETKPVDKEEVKKNEKEKDDPMRLAQQLLESLAPDFALHENTQQKSPVEKPKKLRKDRYASVEEFDYFSSTEHASKRSVKRFKNDFTSDEDETLIRAVVITQIYYGGTNRLIKWEAVQKCFPNRDIYALTRRYLSIRQHTKFKGLQQFLSENWQQMYKDAVSRKDLMPYPDSVDDFDPTPYVKASCRPYMISSSNLATTRLPRDLVDVYETYNIEVVKQETNFREMIFDPSLSVASKMNAYCDMPFTMPLSLNDKQNNEGDENCEKGQLFDAKSTIKSIVAIPDATYDARFSQERLMQYPEDILIAAHQELLDKRIITRVNSENSRLQPGRNFQFTEKFASSLKSPLPPFLLSQAKRFNKFLLEGFQNHKNHLFEETSNSGTLACILDLLSQGKLQISIVGSKFNEYGLSEGYRTRLLEHDNINVTLVLSGKESESKKNYGVTEKLATPPSHEPRLWLNGKCELIEMIWMNIEQSIVYQLLRKPGILRSQLTNLLFPGLEPREFNEVLDYFIAAGAAIEKDGLYLNHNYLFKLT</sequence>
<name>SFC3_SCHPO</name>
<keyword id="KW-0238">DNA-binding</keyword>
<keyword id="KW-0539">Nucleus</keyword>
<keyword id="KW-0597">Phosphoprotein</keyword>
<keyword id="KW-1185">Reference proteome</keyword>
<keyword id="KW-0804">Transcription</keyword>
<keyword id="KW-0805">Transcription regulation</keyword>
<accession>Q9UST7</accession>
<proteinExistence type="evidence at protein level"/>
<organism>
    <name type="scientific">Schizosaccharomyces pombe (strain 972 / ATCC 24843)</name>
    <name type="common">Fission yeast</name>
    <dbReference type="NCBI Taxonomy" id="284812"/>
    <lineage>
        <taxon>Eukaryota</taxon>
        <taxon>Fungi</taxon>
        <taxon>Dikarya</taxon>
        <taxon>Ascomycota</taxon>
        <taxon>Taphrinomycotina</taxon>
        <taxon>Schizosaccharomycetes</taxon>
        <taxon>Schizosaccharomycetales</taxon>
        <taxon>Schizosaccharomycetaceae</taxon>
        <taxon>Schizosaccharomyces</taxon>
    </lineage>
</organism>
<comment type="function">
    <text evidence="1 4 5">TFIIIC mediates tRNA and 5S RNA gene activation by binding to intragenic promoter elements. Upstream of the transcription start site, TFIIIC assembles the initiation complex TFIIIB-TFIIIC-tDNA, which is sufficient for RNA polymerase III recruitment and function. Part of the tauB domain of TFIIIC that binds boxB DNA promoter sites of tRNA and similar genes. Cooperates with sfc6 in DNA binding. Localizes to chromatin insulator sequence without recruiting RNA polymerase III and plays a role in nuclear organization.</text>
</comment>
<comment type="subunit">
    <text evidence="1 4">Component of the TFIIIC complex including sfc1, sfc3, sfc4, sfc6 and sfc7. The subunits are organized in two globular domains, tauA and tauB, connected by a proteolysis-sensitive and flexible linker. Interacts with sfc1, sfc4 and sfc6.</text>
</comment>
<comment type="subcellular location">
    <subcellularLocation>
        <location evidence="6">Nucleus envelope</location>
    </subcellularLocation>
</comment>
<feature type="chain" id="PRO_0000307794" description="Transcription factor tau subunit sfc3">
    <location>
        <begin position="1"/>
        <end position="1339"/>
    </location>
</feature>
<feature type="DNA-binding region" description="A.T hook" evidence="2">
    <location>
        <begin position="485"/>
        <end position="497"/>
    </location>
</feature>
<feature type="region of interest" description="Disordered" evidence="3">
    <location>
        <begin position="470"/>
        <end position="515"/>
    </location>
</feature>
<feature type="region of interest" description="Disordered" evidence="3">
    <location>
        <begin position="791"/>
        <end position="826"/>
    </location>
</feature>
<feature type="compositionally biased region" description="Polar residues" evidence="3">
    <location>
        <begin position="495"/>
        <end position="514"/>
    </location>
</feature>
<feature type="compositionally biased region" description="Basic and acidic residues" evidence="3">
    <location>
        <begin position="798"/>
        <end position="826"/>
    </location>
</feature>
<feature type="modified residue" description="Phosphoserine" evidence="7">
    <location>
        <position position="595"/>
    </location>
</feature>
<feature type="modified residue" description="Phosphoserine" evidence="7">
    <location>
        <position position="596"/>
    </location>
</feature>
<evidence type="ECO:0000250" key="1">
    <source>
        <dbReference type="UniProtKB" id="P34111"/>
    </source>
</evidence>
<evidence type="ECO:0000255" key="2"/>
<evidence type="ECO:0000256" key="3">
    <source>
        <dbReference type="SAM" id="MobiDB-lite"/>
    </source>
</evidence>
<evidence type="ECO:0000269" key="4">
    <source>
    </source>
</evidence>
<evidence type="ECO:0000269" key="5">
    <source>
    </source>
</evidence>
<evidence type="ECO:0000269" key="6">
    <source>
    </source>
</evidence>
<evidence type="ECO:0000269" key="7">
    <source>
    </source>
</evidence>
<evidence type="ECO:0000305" key="8"/>
<evidence type="ECO:0000312" key="9">
    <source>
        <dbReference type="EMBL" id="CAB58159.1"/>
    </source>
</evidence>
<dbReference type="EMBL" id="CU329671">
    <property type="protein sequence ID" value="CAB58159.1"/>
    <property type="molecule type" value="Genomic_DNA"/>
</dbReference>
<dbReference type="PIR" id="T40245">
    <property type="entry name" value="T40245"/>
</dbReference>
<dbReference type="RefSeq" id="NP_596127.1">
    <property type="nucleotide sequence ID" value="NM_001022045.2"/>
</dbReference>
<dbReference type="SMR" id="Q9UST7"/>
<dbReference type="BioGRID" id="276778">
    <property type="interactions" value="8"/>
</dbReference>
<dbReference type="ComplexPortal" id="CPX-8903">
    <property type="entry name" value="General transcription factor TFIIIC complex"/>
</dbReference>
<dbReference type="FunCoup" id="Q9UST7">
    <property type="interactions" value="6"/>
</dbReference>
<dbReference type="IntAct" id="Q9UST7">
    <property type="interactions" value="3"/>
</dbReference>
<dbReference type="STRING" id="284812.Q9UST7"/>
<dbReference type="iPTMnet" id="Q9UST7"/>
<dbReference type="PaxDb" id="4896-SPBC336.07.1"/>
<dbReference type="EnsemblFungi" id="SPBC336.07.1">
    <property type="protein sequence ID" value="SPBC336.07.1:pep"/>
    <property type="gene ID" value="SPBC336.07"/>
</dbReference>
<dbReference type="GeneID" id="2540246"/>
<dbReference type="KEGG" id="spo:2540246"/>
<dbReference type="PomBase" id="SPBC336.07">
    <property type="gene designation" value="sfc3"/>
</dbReference>
<dbReference type="VEuPathDB" id="FungiDB:SPBC336.07"/>
<dbReference type="eggNOG" id="ENOG502S2X2">
    <property type="taxonomic scope" value="Eukaryota"/>
</dbReference>
<dbReference type="HOGENOM" id="CLU_260174_0_0_1"/>
<dbReference type="InParanoid" id="Q9UST7"/>
<dbReference type="OMA" id="MSSMIQR"/>
<dbReference type="PhylomeDB" id="Q9UST7"/>
<dbReference type="Reactome" id="R-SPO-76061">
    <property type="pathway name" value="RNA Polymerase III Transcription Initiation From Type 1 Promoter"/>
</dbReference>
<dbReference type="Reactome" id="R-SPO-76066">
    <property type="pathway name" value="RNA Polymerase III Transcription Initiation From Type 2 Promoter"/>
</dbReference>
<dbReference type="PRO" id="PR:Q9UST7"/>
<dbReference type="Proteomes" id="UP000002485">
    <property type="component" value="Chromosome II"/>
</dbReference>
<dbReference type="GO" id="GO:0005635">
    <property type="term" value="C:nuclear envelope"/>
    <property type="evidence" value="ECO:0007005"/>
    <property type="project" value="PomBase"/>
</dbReference>
<dbReference type="GO" id="GO:0005634">
    <property type="term" value="C:nucleus"/>
    <property type="evidence" value="ECO:0007005"/>
    <property type="project" value="PomBase"/>
</dbReference>
<dbReference type="GO" id="GO:0000127">
    <property type="term" value="C:transcription factor TFIIIC complex"/>
    <property type="evidence" value="ECO:0000314"/>
    <property type="project" value="PomBase"/>
</dbReference>
<dbReference type="GO" id="GO:0003677">
    <property type="term" value="F:DNA binding"/>
    <property type="evidence" value="ECO:0007669"/>
    <property type="project" value="UniProtKB-KW"/>
</dbReference>
<dbReference type="GO" id="GO:0000995">
    <property type="term" value="F:RNA polymerase III general transcription initiation factor activity"/>
    <property type="evidence" value="ECO:0000314"/>
    <property type="project" value="PomBase"/>
</dbReference>
<dbReference type="GO" id="GO:0042791">
    <property type="term" value="P:5S class rRNA transcription by RNA polymerase III"/>
    <property type="evidence" value="ECO:0000318"/>
    <property type="project" value="GO_Central"/>
</dbReference>
<dbReference type="GO" id="GO:0006384">
    <property type="term" value="P:transcription initiation at RNA polymerase III promoter"/>
    <property type="evidence" value="ECO:0000314"/>
    <property type="project" value="PomBase"/>
</dbReference>
<dbReference type="InterPro" id="IPR046488">
    <property type="entry name" value="Sfc3/Tfc3_C"/>
</dbReference>
<dbReference type="InterPro" id="IPR044210">
    <property type="entry name" value="Tfc3-like"/>
</dbReference>
<dbReference type="InterPro" id="IPR007309">
    <property type="entry name" value="TFIIIC_Bblock-bd"/>
</dbReference>
<dbReference type="PANTHER" id="PTHR15180">
    <property type="entry name" value="GENERAL TRANSCRIPTION FACTOR 3C POLYPEPTIDE 1"/>
    <property type="match status" value="1"/>
</dbReference>
<dbReference type="PANTHER" id="PTHR15180:SF1">
    <property type="entry name" value="GENERAL TRANSCRIPTION FACTOR 3C POLYPEPTIDE 1"/>
    <property type="match status" value="1"/>
</dbReference>
<dbReference type="Pfam" id="PF04182">
    <property type="entry name" value="B-block_TFIIIC"/>
    <property type="match status" value="1"/>
</dbReference>
<dbReference type="Pfam" id="PF20222">
    <property type="entry name" value="DUF6581"/>
    <property type="match status" value="1"/>
</dbReference>
<reference evidence="9" key="1">
    <citation type="journal article" date="2002" name="Nature">
        <title>The genome sequence of Schizosaccharomyces pombe.</title>
        <authorList>
            <person name="Wood V."/>
            <person name="Gwilliam R."/>
            <person name="Rajandream M.A."/>
            <person name="Lyne M.H."/>
            <person name="Lyne R."/>
            <person name="Stewart A."/>
            <person name="Sgouros J.G."/>
            <person name="Peat N."/>
            <person name="Hayles J."/>
            <person name="Baker S.G."/>
            <person name="Basham D."/>
            <person name="Bowman S."/>
            <person name="Brooks K."/>
            <person name="Brown D."/>
            <person name="Brown S."/>
            <person name="Chillingworth T."/>
            <person name="Churcher C.M."/>
            <person name="Collins M."/>
            <person name="Connor R."/>
            <person name="Cronin A."/>
            <person name="Davis P."/>
            <person name="Feltwell T."/>
            <person name="Fraser A."/>
            <person name="Gentles S."/>
            <person name="Goble A."/>
            <person name="Hamlin N."/>
            <person name="Harris D.E."/>
            <person name="Hidalgo J."/>
            <person name="Hodgson G."/>
            <person name="Holroyd S."/>
            <person name="Hornsby T."/>
            <person name="Howarth S."/>
            <person name="Huckle E.J."/>
            <person name="Hunt S."/>
            <person name="Jagels K."/>
            <person name="James K.D."/>
            <person name="Jones L."/>
            <person name="Jones M."/>
            <person name="Leather S."/>
            <person name="McDonald S."/>
            <person name="McLean J."/>
            <person name="Mooney P."/>
            <person name="Moule S."/>
            <person name="Mungall K.L."/>
            <person name="Murphy L.D."/>
            <person name="Niblett D."/>
            <person name="Odell C."/>
            <person name="Oliver K."/>
            <person name="O'Neil S."/>
            <person name="Pearson D."/>
            <person name="Quail M.A."/>
            <person name="Rabbinowitsch E."/>
            <person name="Rutherford K.M."/>
            <person name="Rutter S."/>
            <person name="Saunders D."/>
            <person name="Seeger K."/>
            <person name="Sharp S."/>
            <person name="Skelton J."/>
            <person name="Simmonds M.N."/>
            <person name="Squares R."/>
            <person name="Squares S."/>
            <person name="Stevens K."/>
            <person name="Taylor K."/>
            <person name="Taylor R.G."/>
            <person name="Tivey A."/>
            <person name="Walsh S.V."/>
            <person name="Warren T."/>
            <person name="Whitehead S."/>
            <person name="Woodward J.R."/>
            <person name="Volckaert G."/>
            <person name="Aert R."/>
            <person name="Robben J."/>
            <person name="Grymonprez B."/>
            <person name="Weltjens I."/>
            <person name="Vanstreels E."/>
            <person name="Rieger M."/>
            <person name="Schaefer M."/>
            <person name="Mueller-Auer S."/>
            <person name="Gabel C."/>
            <person name="Fuchs M."/>
            <person name="Duesterhoeft A."/>
            <person name="Fritzc C."/>
            <person name="Holzer E."/>
            <person name="Moestl D."/>
            <person name="Hilbert H."/>
            <person name="Borzym K."/>
            <person name="Langer I."/>
            <person name="Beck A."/>
            <person name="Lehrach H."/>
            <person name="Reinhardt R."/>
            <person name="Pohl T.M."/>
            <person name="Eger P."/>
            <person name="Zimmermann W."/>
            <person name="Wedler H."/>
            <person name="Wambutt R."/>
            <person name="Purnelle B."/>
            <person name="Goffeau A."/>
            <person name="Cadieu E."/>
            <person name="Dreano S."/>
            <person name="Gloux S."/>
            <person name="Lelaure V."/>
            <person name="Mottier S."/>
            <person name="Galibert F."/>
            <person name="Aves S.J."/>
            <person name="Xiang Z."/>
            <person name="Hunt C."/>
            <person name="Moore K."/>
            <person name="Hurst S.M."/>
            <person name="Lucas M."/>
            <person name="Rochet M."/>
            <person name="Gaillardin C."/>
            <person name="Tallada V.A."/>
            <person name="Garzon A."/>
            <person name="Thode G."/>
            <person name="Daga R.R."/>
            <person name="Cruzado L."/>
            <person name="Jimenez J."/>
            <person name="Sanchez M."/>
            <person name="del Rey F."/>
            <person name="Benito J."/>
            <person name="Dominguez A."/>
            <person name="Revuelta J.L."/>
            <person name="Moreno S."/>
            <person name="Armstrong J."/>
            <person name="Forsburg S.L."/>
            <person name="Cerutti L."/>
            <person name="Lowe T."/>
            <person name="McCombie W.R."/>
            <person name="Paulsen I."/>
            <person name="Potashkin J."/>
            <person name="Shpakovski G.V."/>
            <person name="Ussery D."/>
            <person name="Barrell B.G."/>
            <person name="Nurse P."/>
        </authorList>
    </citation>
    <scope>NUCLEOTIDE SEQUENCE [LARGE SCALE GENOMIC DNA]</scope>
    <source>
        <strain>972 / ATCC 24843</strain>
    </source>
</reference>
<reference evidence="8" key="2">
    <citation type="journal article" date="2000" name="J. Biol. Chem.">
        <title>Isolation and cloning of four subunits of a fission yeast TFIIIC complex that includes an ortholog of the human regulatory protein TFIIICbeta.</title>
        <authorList>
            <person name="Huang Y."/>
            <person name="Hamada M."/>
            <person name="Maraia R.J."/>
        </authorList>
    </citation>
    <scope>FUNCTION</scope>
    <scope>IDENTIFICATION IN TFIIIC</scope>
    <scope>INTERACTION WITH SFC1; SFC4 AND SFC6</scope>
</reference>
<reference evidence="8" key="3">
    <citation type="journal article" date="2006" name="Cell">
        <title>A role for TFIIIC transcription factor complex in genome organization.</title>
        <authorList>
            <person name="Noma K."/>
            <person name="Cam H.P."/>
            <person name="Maraia R.J."/>
            <person name="Grewal S.I.S."/>
        </authorList>
    </citation>
    <scope>FUNCTION</scope>
</reference>
<reference evidence="8" key="4">
    <citation type="journal article" date="2006" name="Nat. Biotechnol.">
        <title>ORFeome cloning and global analysis of protein localization in the fission yeast Schizosaccharomyces pombe.</title>
        <authorList>
            <person name="Matsuyama A."/>
            <person name="Arai R."/>
            <person name="Yashiroda Y."/>
            <person name="Shirai A."/>
            <person name="Kamata A."/>
            <person name="Sekido S."/>
            <person name="Kobayashi Y."/>
            <person name="Hashimoto A."/>
            <person name="Hamamoto M."/>
            <person name="Hiraoka Y."/>
            <person name="Horinouchi S."/>
            <person name="Yoshida M."/>
        </authorList>
    </citation>
    <scope>SUBCELLULAR LOCATION [LARGE SCALE ANALYSIS]</scope>
</reference>
<reference key="5">
    <citation type="journal article" date="2008" name="J. Proteome Res.">
        <title>Phosphoproteome analysis of fission yeast.</title>
        <authorList>
            <person name="Wilson-Grady J.T."/>
            <person name="Villen J."/>
            <person name="Gygi S.P."/>
        </authorList>
    </citation>
    <scope>PHOSPHORYLATION [LARGE SCALE ANALYSIS] AT SER-595 AND SER-596</scope>
    <scope>IDENTIFICATION BY MASS SPECTROMETRY</scope>
</reference>